<protein>
    <recommendedName>
        <fullName evidence="1">5-methyltetrahydropteroyltriglutamate--homocysteine methyltransferase</fullName>
        <ecNumber evidence="1">2.1.1.14</ecNumber>
    </recommendedName>
    <alternativeName>
        <fullName evidence="1">Cobalamin-independent methionine synthase</fullName>
    </alternativeName>
    <alternativeName>
        <fullName evidence="1">Methionine synthase, vitamin-B12 independent isozyme</fullName>
    </alternativeName>
</protein>
<reference key="1">
    <citation type="submission" date="2007-11" db="EMBL/GenBank/DDBJ databases">
        <authorList>
            <consortium name="The Salmonella enterica serovar Arizonae Genome Sequencing Project"/>
            <person name="McClelland M."/>
            <person name="Sanderson E.K."/>
            <person name="Porwollik S."/>
            <person name="Spieth J."/>
            <person name="Clifton W.S."/>
            <person name="Fulton R."/>
            <person name="Chunyan W."/>
            <person name="Wollam A."/>
            <person name="Shah N."/>
            <person name="Pepin K."/>
            <person name="Bhonagiri V."/>
            <person name="Nash W."/>
            <person name="Johnson M."/>
            <person name="Thiruvilangam P."/>
            <person name="Wilson R."/>
        </authorList>
    </citation>
    <scope>NUCLEOTIDE SEQUENCE [LARGE SCALE GENOMIC DNA]</scope>
    <source>
        <strain>ATCC BAA-731 / CDC346-86 / RSK2980</strain>
    </source>
</reference>
<organism>
    <name type="scientific">Salmonella arizonae (strain ATCC BAA-731 / CDC346-86 / RSK2980)</name>
    <dbReference type="NCBI Taxonomy" id="41514"/>
    <lineage>
        <taxon>Bacteria</taxon>
        <taxon>Pseudomonadati</taxon>
        <taxon>Pseudomonadota</taxon>
        <taxon>Gammaproteobacteria</taxon>
        <taxon>Enterobacterales</taxon>
        <taxon>Enterobacteriaceae</taxon>
        <taxon>Salmonella</taxon>
    </lineage>
</organism>
<dbReference type="EC" id="2.1.1.14" evidence="1"/>
<dbReference type="EMBL" id="CP000880">
    <property type="protein sequence ID" value="ABX23497.1"/>
    <property type="molecule type" value="Genomic_DNA"/>
</dbReference>
<dbReference type="SMR" id="A9MIY8"/>
<dbReference type="STRING" id="41514.SARI_03692"/>
<dbReference type="KEGG" id="ses:SARI_03692"/>
<dbReference type="HOGENOM" id="CLU_013175_0_0_6"/>
<dbReference type="UniPathway" id="UPA00051">
    <property type="reaction ID" value="UER00082"/>
</dbReference>
<dbReference type="Proteomes" id="UP000002084">
    <property type="component" value="Chromosome"/>
</dbReference>
<dbReference type="GO" id="GO:0003871">
    <property type="term" value="F:5-methyltetrahydropteroyltriglutamate-homocysteine S-methyltransferase activity"/>
    <property type="evidence" value="ECO:0007669"/>
    <property type="project" value="UniProtKB-UniRule"/>
</dbReference>
<dbReference type="GO" id="GO:0008270">
    <property type="term" value="F:zinc ion binding"/>
    <property type="evidence" value="ECO:0007669"/>
    <property type="project" value="InterPro"/>
</dbReference>
<dbReference type="GO" id="GO:0009086">
    <property type="term" value="P:methionine biosynthetic process"/>
    <property type="evidence" value="ECO:0007669"/>
    <property type="project" value="UniProtKB-UniRule"/>
</dbReference>
<dbReference type="GO" id="GO:0032259">
    <property type="term" value="P:methylation"/>
    <property type="evidence" value="ECO:0007669"/>
    <property type="project" value="UniProtKB-KW"/>
</dbReference>
<dbReference type="CDD" id="cd03311">
    <property type="entry name" value="CIMS_C_terminal_like"/>
    <property type="match status" value="1"/>
</dbReference>
<dbReference type="CDD" id="cd03312">
    <property type="entry name" value="CIMS_N_terminal_like"/>
    <property type="match status" value="1"/>
</dbReference>
<dbReference type="FunFam" id="3.20.20.210:FF:000002">
    <property type="entry name" value="5-methyltetrahydropteroyltriglutamate--homocysteine methyltransferase"/>
    <property type="match status" value="1"/>
</dbReference>
<dbReference type="FunFam" id="3.20.20.210:FF:000003">
    <property type="entry name" value="5-methyltetrahydropteroyltriglutamate--homocysteine methyltransferase"/>
    <property type="match status" value="1"/>
</dbReference>
<dbReference type="Gene3D" id="3.20.20.210">
    <property type="match status" value="2"/>
</dbReference>
<dbReference type="HAMAP" id="MF_00172">
    <property type="entry name" value="Meth_synth"/>
    <property type="match status" value="1"/>
</dbReference>
<dbReference type="InterPro" id="IPR013215">
    <property type="entry name" value="Cbl-indep_Met_Synth_N"/>
</dbReference>
<dbReference type="InterPro" id="IPR006276">
    <property type="entry name" value="Cobalamin-indep_Met_synthase"/>
</dbReference>
<dbReference type="InterPro" id="IPR002629">
    <property type="entry name" value="Met_Synth_C/arc"/>
</dbReference>
<dbReference type="InterPro" id="IPR038071">
    <property type="entry name" value="UROD/MetE-like_sf"/>
</dbReference>
<dbReference type="NCBIfam" id="TIGR01371">
    <property type="entry name" value="met_syn_B12ind"/>
    <property type="match status" value="1"/>
</dbReference>
<dbReference type="NCBIfam" id="NF003556">
    <property type="entry name" value="PRK05222.1"/>
    <property type="match status" value="1"/>
</dbReference>
<dbReference type="PANTHER" id="PTHR30519">
    <property type="entry name" value="5-METHYLTETRAHYDROPTEROYLTRIGLUTAMATE--HOMOCYSTEINE METHYLTRANSFERASE"/>
    <property type="match status" value="1"/>
</dbReference>
<dbReference type="Pfam" id="PF08267">
    <property type="entry name" value="Meth_synt_1"/>
    <property type="match status" value="1"/>
</dbReference>
<dbReference type="Pfam" id="PF01717">
    <property type="entry name" value="Meth_synt_2"/>
    <property type="match status" value="1"/>
</dbReference>
<dbReference type="PIRSF" id="PIRSF000382">
    <property type="entry name" value="MeTrfase_B12_ind"/>
    <property type="match status" value="1"/>
</dbReference>
<dbReference type="SUPFAM" id="SSF51726">
    <property type="entry name" value="UROD/MetE-like"/>
    <property type="match status" value="2"/>
</dbReference>
<comment type="function">
    <text evidence="1">Catalyzes the transfer of a methyl group from 5-methyltetrahydrofolate to homocysteine resulting in methionine formation.</text>
</comment>
<comment type="catalytic activity">
    <reaction evidence="1">
        <text>5-methyltetrahydropteroyltri-L-glutamate + L-homocysteine = tetrahydropteroyltri-L-glutamate + L-methionine</text>
        <dbReference type="Rhea" id="RHEA:21196"/>
        <dbReference type="ChEBI" id="CHEBI:57844"/>
        <dbReference type="ChEBI" id="CHEBI:58140"/>
        <dbReference type="ChEBI" id="CHEBI:58199"/>
        <dbReference type="ChEBI" id="CHEBI:58207"/>
        <dbReference type="EC" id="2.1.1.14"/>
    </reaction>
</comment>
<comment type="cofactor">
    <cofactor evidence="1">
        <name>Zn(2+)</name>
        <dbReference type="ChEBI" id="CHEBI:29105"/>
    </cofactor>
    <text evidence="1">Binds 1 zinc ion per subunit.</text>
</comment>
<comment type="pathway">
    <text evidence="1">Amino-acid biosynthesis; L-methionine biosynthesis via de novo pathway; L-methionine from L-homocysteine (MetE route): step 1/1.</text>
</comment>
<comment type="similarity">
    <text evidence="1">Belongs to the vitamin-B12 independent methionine synthase family.</text>
</comment>
<name>METE_SALAR</name>
<evidence type="ECO:0000255" key="1">
    <source>
        <dbReference type="HAMAP-Rule" id="MF_00172"/>
    </source>
</evidence>
<proteinExistence type="inferred from homology"/>
<sequence length="754" mass="84588">MTILTHTLGFPRVGLRRELKKAQESYWAGNATREELLAVGRELRARHWQQQKQAGIDLLPVGDFAWYDHVLTTSLLLGNVPARHQNNDGSVDIDTLFRIGRGRAPTGEPAAAAEMTKWFNTNYHYMVPEFSKGQQFRLTWTQLLEEVDEALALGHKIKPVLLGPVTYLWLGKVKGEPFDRLTLLKDILPVYQHVLAELAKRGIEWVQIDEPALVLELPQAWLDAFKLAYDALAGQVKLLLTTYFEGVTPNLNTIIALPVQGLHVDLIHGKDDVSELHQRLPADWLLSAGLINGRNVWRADLPEKYAQINDIVGKRALWVSSSCSLLHSPIDLSVETRLDAEVKSWFAFALQKCGELALLRDALNSGDTAAVTEWSAPIQARRHSTRVHNVGVEKRLAAITAQDSQRENPYEVRAEAQRARFKLPAWPTTTIGSFPQTTEIRGLRLDFKKGNLDANHYRTGIAEHIRQAIIEQERLGLDVLVHGEAERNDMVEYFGEHLDGFVFTQNGWVQSYGSRCVKPPVVIGDISRPAPITVEWAKYAQSLTDKPVKGMLTGPVTILCWSFPREDVTRETIAKQIALALRDEVADLEAAGIGIIQIDEPALREGLPLRRSDWDAYLAWGVEAFRINAAAAKDETQIHTHMCYCEFNDIMDSIAALDADVITIETSRSDMELLESFEAFDYPNEIGPGVYDIHSPNVPSVEWIEALLKKAAQRIPAQRLWVNPDCGLKTRGWPETRAALANMVKAAHNLRQAE</sequence>
<feature type="chain" id="PRO_1000077116" description="5-methyltetrahydropteroyltriglutamate--homocysteine methyltransferase">
    <location>
        <begin position="1"/>
        <end position="754"/>
    </location>
</feature>
<feature type="active site" description="Proton donor" evidence="1">
    <location>
        <position position="694"/>
    </location>
</feature>
<feature type="binding site" evidence="1">
    <location>
        <begin position="17"/>
        <end position="20"/>
    </location>
    <ligand>
        <name>5-methyltetrahydropteroyltri-L-glutamate</name>
        <dbReference type="ChEBI" id="CHEBI:58207"/>
    </ligand>
</feature>
<feature type="binding site" evidence="1">
    <location>
        <position position="117"/>
    </location>
    <ligand>
        <name>5-methyltetrahydropteroyltri-L-glutamate</name>
        <dbReference type="ChEBI" id="CHEBI:58207"/>
    </ligand>
</feature>
<feature type="binding site" evidence="1">
    <location>
        <begin position="431"/>
        <end position="433"/>
    </location>
    <ligand>
        <name>L-homocysteine</name>
        <dbReference type="ChEBI" id="CHEBI:58199"/>
    </ligand>
</feature>
<feature type="binding site" evidence="1">
    <location>
        <begin position="431"/>
        <end position="433"/>
    </location>
    <ligand>
        <name>L-methionine</name>
        <dbReference type="ChEBI" id="CHEBI:57844"/>
    </ligand>
</feature>
<feature type="binding site" evidence="1">
    <location>
        <position position="484"/>
    </location>
    <ligand>
        <name>L-homocysteine</name>
        <dbReference type="ChEBI" id="CHEBI:58199"/>
    </ligand>
</feature>
<feature type="binding site" evidence="1">
    <location>
        <position position="484"/>
    </location>
    <ligand>
        <name>L-methionine</name>
        <dbReference type="ChEBI" id="CHEBI:57844"/>
    </ligand>
</feature>
<feature type="binding site" evidence="1">
    <location>
        <begin position="515"/>
        <end position="516"/>
    </location>
    <ligand>
        <name>5-methyltetrahydropteroyltri-L-glutamate</name>
        <dbReference type="ChEBI" id="CHEBI:58207"/>
    </ligand>
</feature>
<feature type="binding site" evidence="1">
    <location>
        <position position="561"/>
    </location>
    <ligand>
        <name>5-methyltetrahydropteroyltri-L-glutamate</name>
        <dbReference type="ChEBI" id="CHEBI:58207"/>
    </ligand>
</feature>
<feature type="binding site" evidence="1">
    <location>
        <position position="599"/>
    </location>
    <ligand>
        <name>L-homocysteine</name>
        <dbReference type="ChEBI" id="CHEBI:58199"/>
    </ligand>
</feature>
<feature type="binding site" evidence="1">
    <location>
        <position position="599"/>
    </location>
    <ligand>
        <name>L-methionine</name>
        <dbReference type="ChEBI" id="CHEBI:57844"/>
    </ligand>
</feature>
<feature type="binding site" evidence="1">
    <location>
        <position position="605"/>
    </location>
    <ligand>
        <name>5-methyltetrahydropteroyltri-L-glutamate</name>
        <dbReference type="ChEBI" id="CHEBI:58207"/>
    </ligand>
</feature>
<feature type="binding site" evidence="1">
    <location>
        <position position="641"/>
    </location>
    <ligand>
        <name>Zn(2+)</name>
        <dbReference type="ChEBI" id="CHEBI:29105"/>
        <note>catalytic</note>
    </ligand>
</feature>
<feature type="binding site" evidence="1">
    <location>
        <position position="643"/>
    </location>
    <ligand>
        <name>Zn(2+)</name>
        <dbReference type="ChEBI" id="CHEBI:29105"/>
        <note>catalytic</note>
    </ligand>
</feature>
<feature type="binding site" evidence="1">
    <location>
        <position position="665"/>
    </location>
    <ligand>
        <name>Zn(2+)</name>
        <dbReference type="ChEBI" id="CHEBI:29105"/>
        <note>catalytic</note>
    </ligand>
</feature>
<feature type="binding site" evidence="1">
    <location>
        <position position="726"/>
    </location>
    <ligand>
        <name>Zn(2+)</name>
        <dbReference type="ChEBI" id="CHEBI:29105"/>
        <note>catalytic</note>
    </ligand>
</feature>
<gene>
    <name evidence="1" type="primary">metE</name>
    <name type="ordered locus">SARI_03692</name>
</gene>
<keyword id="KW-0028">Amino-acid biosynthesis</keyword>
<keyword id="KW-0479">Metal-binding</keyword>
<keyword id="KW-0486">Methionine biosynthesis</keyword>
<keyword id="KW-0489">Methyltransferase</keyword>
<keyword id="KW-1185">Reference proteome</keyword>
<keyword id="KW-0677">Repeat</keyword>
<keyword id="KW-0808">Transferase</keyword>
<keyword id="KW-0862">Zinc</keyword>
<accession>A9MIY8</accession>